<comment type="function">
    <text evidence="1">Participates actively in the response to hyperosmotic and heat shock by preventing the aggregation of stress-denatured proteins and by disaggregating proteins, also in an autonomous, DnaK-independent fashion. Unfolded proteins bind initially to DnaJ; upon interaction with the DnaJ-bound protein, DnaK hydrolyzes its bound ATP, resulting in the formation of a stable complex. GrpE releases ADP from DnaK; ATP binding to DnaK triggers the release of the substrate protein, thus completing the reaction cycle. Several rounds of ATP-dependent interactions between DnaJ, DnaK and GrpE are required for fully efficient folding. Also involved, together with DnaK and GrpE, in the DNA replication of plasmids through activation of initiation proteins.</text>
</comment>
<comment type="cofactor">
    <cofactor evidence="1">
        <name>Zn(2+)</name>
        <dbReference type="ChEBI" id="CHEBI:29105"/>
    </cofactor>
    <text evidence="1">Binds 2 Zn(2+) ions per monomer.</text>
</comment>
<comment type="subunit">
    <text evidence="1">Homodimer.</text>
</comment>
<comment type="subcellular location">
    <subcellularLocation>
        <location evidence="1">Cytoplasm</location>
    </subcellularLocation>
</comment>
<comment type="domain">
    <text evidence="1">The J domain is necessary and sufficient to stimulate DnaK ATPase activity. Zinc center 1 plays an important role in the autonomous, DnaK-independent chaperone activity of DnaJ. Zinc center 2 is essential for interaction with DnaK and for DnaJ activity.</text>
</comment>
<comment type="similarity">
    <text evidence="1">Belongs to the DnaJ family.</text>
</comment>
<proteinExistence type="inferred from homology"/>
<sequence length="377" mass="40858">MNNQEYYDRLGVSKDASQDEIKKAYRRMSKKYHPDINKEPGAEEKYKEIQEAYDTLGDEQKRAAYDQYGPAGANGGFGDGSGFSGFDSSGFGGFEDIFSSFFGGGASRNPNAPRQGDDLQYRVNLQFEEAVFGTEKEVHYNREASCHTCNGSGAKPGTSPVTCSKCHGSGVINMDTQTPLGMMRRQVTCDVCHGTGQEIKEPCPTCHGTGHEKQSHKVSVKIPAGVETGQQIRLAGQGEAGFNGGPYGDLFVIINVLKSDKFERDGSTIYYSMDINFVQAALGDTVEVPTVHGNVELAIPAGTQTGKTFRLKGKGAPRLRGNGQGDQHVTVNVVTPTKLNDAQKEALQDFAKASGINPVHPKKKGFFNKVKDAFDEM</sequence>
<protein>
    <recommendedName>
        <fullName evidence="1">Chaperone protein DnaJ</fullName>
    </recommendedName>
</protein>
<feature type="chain" id="PRO_0000070900" description="Chaperone protein DnaJ">
    <location>
        <begin position="1"/>
        <end position="377"/>
    </location>
</feature>
<feature type="domain" description="J" evidence="1">
    <location>
        <begin position="5"/>
        <end position="69"/>
    </location>
</feature>
<feature type="repeat" description="CXXCXGXG motif">
    <location>
        <begin position="146"/>
        <end position="153"/>
    </location>
</feature>
<feature type="repeat" description="CXXCXGXG motif">
    <location>
        <begin position="163"/>
        <end position="170"/>
    </location>
</feature>
<feature type="repeat" description="CXXCXGXG motif">
    <location>
        <begin position="189"/>
        <end position="196"/>
    </location>
</feature>
<feature type="repeat" description="CXXCXGXG motif">
    <location>
        <begin position="203"/>
        <end position="210"/>
    </location>
</feature>
<feature type="zinc finger region" description="CR-type" evidence="1">
    <location>
        <begin position="133"/>
        <end position="215"/>
    </location>
</feature>
<feature type="binding site" evidence="1">
    <location>
        <position position="146"/>
    </location>
    <ligand>
        <name>Zn(2+)</name>
        <dbReference type="ChEBI" id="CHEBI:29105"/>
        <label>1</label>
    </ligand>
</feature>
<feature type="binding site" evidence="1">
    <location>
        <position position="149"/>
    </location>
    <ligand>
        <name>Zn(2+)</name>
        <dbReference type="ChEBI" id="CHEBI:29105"/>
        <label>1</label>
    </ligand>
</feature>
<feature type="binding site" evidence="1">
    <location>
        <position position="163"/>
    </location>
    <ligand>
        <name>Zn(2+)</name>
        <dbReference type="ChEBI" id="CHEBI:29105"/>
        <label>2</label>
    </ligand>
</feature>
<feature type="binding site" evidence="1">
    <location>
        <position position="166"/>
    </location>
    <ligand>
        <name>Zn(2+)</name>
        <dbReference type="ChEBI" id="CHEBI:29105"/>
        <label>2</label>
    </ligand>
</feature>
<feature type="binding site" evidence="1">
    <location>
        <position position="189"/>
    </location>
    <ligand>
        <name>Zn(2+)</name>
        <dbReference type="ChEBI" id="CHEBI:29105"/>
        <label>2</label>
    </ligand>
</feature>
<feature type="binding site" evidence="1">
    <location>
        <position position="192"/>
    </location>
    <ligand>
        <name>Zn(2+)</name>
        <dbReference type="ChEBI" id="CHEBI:29105"/>
        <label>2</label>
    </ligand>
</feature>
<feature type="binding site" evidence="1">
    <location>
        <position position="203"/>
    </location>
    <ligand>
        <name>Zn(2+)</name>
        <dbReference type="ChEBI" id="CHEBI:29105"/>
        <label>1</label>
    </ligand>
</feature>
<feature type="binding site" evidence="1">
    <location>
        <position position="206"/>
    </location>
    <ligand>
        <name>Zn(2+)</name>
        <dbReference type="ChEBI" id="CHEBI:29105"/>
        <label>1</label>
    </ligand>
</feature>
<reference key="1">
    <citation type="journal article" date="2002" name="Proc. Natl. Acad. Sci. U.S.A.">
        <title>Genome sequence of Streptococcus mutans UA159, a cariogenic dental pathogen.</title>
        <authorList>
            <person name="Ajdic D.J."/>
            <person name="McShan W.M."/>
            <person name="McLaughlin R.E."/>
            <person name="Savic G."/>
            <person name="Chang J."/>
            <person name="Carson M.B."/>
            <person name="Primeaux C."/>
            <person name="Tian R."/>
            <person name="Kenton S."/>
            <person name="Jia H.G."/>
            <person name="Lin S.P."/>
            <person name="Qian Y."/>
            <person name="Li S."/>
            <person name="Zhu H."/>
            <person name="Najar F.Z."/>
            <person name="Lai H."/>
            <person name="White J."/>
            <person name="Roe B.A."/>
            <person name="Ferretti J.J."/>
        </authorList>
    </citation>
    <scope>NUCLEOTIDE SEQUENCE [LARGE SCALE GENOMIC DNA]</scope>
    <source>
        <strain>ATCC 700610 / UA159</strain>
    </source>
</reference>
<evidence type="ECO:0000255" key="1">
    <source>
        <dbReference type="HAMAP-Rule" id="MF_01152"/>
    </source>
</evidence>
<dbReference type="EMBL" id="AE014133">
    <property type="protein sequence ID" value="AAN57868.1"/>
    <property type="molecule type" value="Genomic_DNA"/>
</dbReference>
<dbReference type="RefSeq" id="NP_720562.1">
    <property type="nucleotide sequence ID" value="NC_004350.2"/>
</dbReference>
<dbReference type="RefSeq" id="WP_002263418.1">
    <property type="nucleotide sequence ID" value="NC_004350.2"/>
</dbReference>
<dbReference type="SMR" id="Q8DWH2"/>
<dbReference type="STRING" id="210007.SMU_83"/>
<dbReference type="GeneID" id="93860463"/>
<dbReference type="KEGG" id="smu:SMU_83"/>
<dbReference type="PATRIC" id="fig|210007.7.peg.72"/>
<dbReference type="eggNOG" id="COG0484">
    <property type="taxonomic scope" value="Bacteria"/>
</dbReference>
<dbReference type="HOGENOM" id="CLU_017633_0_7_9"/>
<dbReference type="OrthoDB" id="9779889at2"/>
<dbReference type="PhylomeDB" id="Q8DWH2"/>
<dbReference type="Proteomes" id="UP000002512">
    <property type="component" value="Chromosome"/>
</dbReference>
<dbReference type="GO" id="GO:0005737">
    <property type="term" value="C:cytoplasm"/>
    <property type="evidence" value="ECO:0007669"/>
    <property type="project" value="UniProtKB-SubCell"/>
</dbReference>
<dbReference type="GO" id="GO:0005524">
    <property type="term" value="F:ATP binding"/>
    <property type="evidence" value="ECO:0007669"/>
    <property type="project" value="InterPro"/>
</dbReference>
<dbReference type="GO" id="GO:0031072">
    <property type="term" value="F:heat shock protein binding"/>
    <property type="evidence" value="ECO:0007669"/>
    <property type="project" value="InterPro"/>
</dbReference>
<dbReference type="GO" id="GO:0051082">
    <property type="term" value="F:unfolded protein binding"/>
    <property type="evidence" value="ECO:0007669"/>
    <property type="project" value="UniProtKB-UniRule"/>
</dbReference>
<dbReference type="GO" id="GO:0008270">
    <property type="term" value="F:zinc ion binding"/>
    <property type="evidence" value="ECO:0007669"/>
    <property type="project" value="UniProtKB-UniRule"/>
</dbReference>
<dbReference type="GO" id="GO:0051085">
    <property type="term" value="P:chaperone cofactor-dependent protein refolding"/>
    <property type="evidence" value="ECO:0007669"/>
    <property type="project" value="TreeGrafter"/>
</dbReference>
<dbReference type="GO" id="GO:0006260">
    <property type="term" value="P:DNA replication"/>
    <property type="evidence" value="ECO:0007669"/>
    <property type="project" value="UniProtKB-KW"/>
</dbReference>
<dbReference type="GO" id="GO:0042026">
    <property type="term" value="P:protein refolding"/>
    <property type="evidence" value="ECO:0007669"/>
    <property type="project" value="TreeGrafter"/>
</dbReference>
<dbReference type="GO" id="GO:0009408">
    <property type="term" value="P:response to heat"/>
    <property type="evidence" value="ECO:0007669"/>
    <property type="project" value="InterPro"/>
</dbReference>
<dbReference type="CDD" id="cd06257">
    <property type="entry name" value="DnaJ"/>
    <property type="match status" value="1"/>
</dbReference>
<dbReference type="CDD" id="cd10747">
    <property type="entry name" value="DnaJ_C"/>
    <property type="match status" value="1"/>
</dbReference>
<dbReference type="CDD" id="cd10719">
    <property type="entry name" value="DnaJ_zf"/>
    <property type="match status" value="1"/>
</dbReference>
<dbReference type="FunFam" id="1.10.287.110:FF:000031">
    <property type="entry name" value="Molecular chaperone DnaJ"/>
    <property type="match status" value="1"/>
</dbReference>
<dbReference type="FunFam" id="2.10.230.10:FF:000002">
    <property type="entry name" value="Molecular chaperone DnaJ"/>
    <property type="match status" value="1"/>
</dbReference>
<dbReference type="FunFam" id="2.60.260.20:FF:000004">
    <property type="entry name" value="Molecular chaperone DnaJ"/>
    <property type="match status" value="1"/>
</dbReference>
<dbReference type="Gene3D" id="6.20.20.10">
    <property type="match status" value="2"/>
</dbReference>
<dbReference type="Gene3D" id="1.10.287.110">
    <property type="entry name" value="DnaJ domain"/>
    <property type="match status" value="1"/>
</dbReference>
<dbReference type="Gene3D" id="2.60.260.20">
    <property type="entry name" value="Urease metallochaperone UreE, N-terminal domain"/>
    <property type="match status" value="2"/>
</dbReference>
<dbReference type="HAMAP" id="MF_01152">
    <property type="entry name" value="DnaJ"/>
    <property type="match status" value="1"/>
</dbReference>
<dbReference type="InterPro" id="IPR012724">
    <property type="entry name" value="DnaJ"/>
</dbReference>
<dbReference type="InterPro" id="IPR002939">
    <property type="entry name" value="DnaJ_C"/>
</dbReference>
<dbReference type="InterPro" id="IPR001623">
    <property type="entry name" value="DnaJ_domain"/>
</dbReference>
<dbReference type="InterPro" id="IPR018253">
    <property type="entry name" value="DnaJ_domain_CS"/>
</dbReference>
<dbReference type="InterPro" id="IPR008971">
    <property type="entry name" value="HSP40/DnaJ_pept-bd"/>
</dbReference>
<dbReference type="InterPro" id="IPR001305">
    <property type="entry name" value="HSP_DnaJ_Cys-rich_dom"/>
</dbReference>
<dbReference type="InterPro" id="IPR036410">
    <property type="entry name" value="HSP_DnaJ_Cys-rich_dom_sf"/>
</dbReference>
<dbReference type="InterPro" id="IPR036869">
    <property type="entry name" value="J_dom_sf"/>
</dbReference>
<dbReference type="NCBIfam" id="TIGR02349">
    <property type="entry name" value="DnaJ_bact"/>
    <property type="match status" value="1"/>
</dbReference>
<dbReference type="NCBIfam" id="NF008035">
    <property type="entry name" value="PRK10767.1"/>
    <property type="match status" value="1"/>
</dbReference>
<dbReference type="NCBIfam" id="NF010869">
    <property type="entry name" value="PRK14276.1"/>
    <property type="match status" value="1"/>
</dbReference>
<dbReference type="PANTHER" id="PTHR43096:SF48">
    <property type="entry name" value="CHAPERONE PROTEIN DNAJ"/>
    <property type="match status" value="1"/>
</dbReference>
<dbReference type="PANTHER" id="PTHR43096">
    <property type="entry name" value="DNAJ HOMOLOG 1, MITOCHONDRIAL-RELATED"/>
    <property type="match status" value="1"/>
</dbReference>
<dbReference type="Pfam" id="PF00226">
    <property type="entry name" value="DnaJ"/>
    <property type="match status" value="1"/>
</dbReference>
<dbReference type="Pfam" id="PF01556">
    <property type="entry name" value="DnaJ_C"/>
    <property type="match status" value="1"/>
</dbReference>
<dbReference type="Pfam" id="PF00684">
    <property type="entry name" value="DnaJ_CXXCXGXG"/>
    <property type="match status" value="1"/>
</dbReference>
<dbReference type="PRINTS" id="PR00625">
    <property type="entry name" value="JDOMAIN"/>
</dbReference>
<dbReference type="SMART" id="SM00271">
    <property type="entry name" value="DnaJ"/>
    <property type="match status" value="1"/>
</dbReference>
<dbReference type="SUPFAM" id="SSF46565">
    <property type="entry name" value="Chaperone J-domain"/>
    <property type="match status" value="1"/>
</dbReference>
<dbReference type="SUPFAM" id="SSF57938">
    <property type="entry name" value="DnaJ/Hsp40 cysteine-rich domain"/>
    <property type="match status" value="1"/>
</dbReference>
<dbReference type="SUPFAM" id="SSF49493">
    <property type="entry name" value="HSP40/DnaJ peptide-binding domain"/>
    <property type="match status" value="2"/>
</dbReference>
<dbReference type="PROSITE" id="PS00636">
    <property type="entry name" value="DNAJ_1"/>
    <property type="match status" value="1"/>
</dbReference>
<dbReference type="PROSITE" id="PS50076">
    <property type="entry name" value="DNAJ_2"/>
    <property type="match status" value="1"/>
</dbReference>
<dbReference type="PROSITE" id="PS51188">
    <property type="entry name" value="ZF_CR"/>
    <property type="match status" value="1"/>
</dbReference>
<organism>
    <name type="scientific">Streptococcus mutans serotype c (strain ATCC 700610 / UA159)</name>
    <dbReference type="NCBI Taxonomy" id="210007"/>
    <lineage>
        <taxon>Bacteria</taxon>
        <taxon>Bacillati</taxon>
        <taxon>Bacillota</taxon>
        <taxon>Bacilli</taxon>
        <taxon>Lactobacillales</taxon>
        <taxon>Streptococcaceae</taxon>
        <taxon>Streptococcus</taxon>
    </lineage>
</organism>
<accession>Q8DWH2</accession>
<keyword id="KW-0143">Chaperone</keyword>
<keyword id="KW-0963">Cytoplasm</keyword>
<keyword id="KW-0235">DNA replication</keyword>
<keyword id="KW-0479">Metal-binding</keyword>
<keyword id="KW-1185">Reference proteome</keyword>
<keyword id="KW-0677">Repeat</keyword>
<keyword id="KW-0346">Stress response</keyword>
<keyword id="KW-0862">Zinc</keyword>
<keyword id="KW-0863">Zinc-finger</keyword>
<gene>
    <name evidence="1" type="primary">dnaJ</name>
    <name type="ordered locus">SMU_83</name>
</gene>
<name>DNAJ_STRMU</name>